<keyword id="KW-0150">Chloroplast</keyword>
<keyword id="KW-0934">Plastid</keyword>
<keyword id="KW-0687">Ribonucleoprotein</keyword>
<keyword id="KW-0689">Ribosomal protein</keyword>
<keyword id="KW-0694">RNA-binding</keyword>
<keyword id="KW-0699">rRNA-binding</keyword>
<gene>
    <name type="primary">rps4</name>
</gene>
<reference key="1">
    <citation type="journal article" date="2007" name="Mol. Phylogenet. Evol.">
        <title>Phylogenetic and evolutionary implications of complete chloroplast genome sequences of four early-diverging angiosperms: Buxus (Buxaceae), Chloranthus (Chloranthaceae), Dioscorea (Dioscoreaceae), and Illicium (Schisandraceae).</title>
        <authorList>
            <person name="Hansen D.R."/>
            <person name="Dastidar S.G."/>
            <person name="Cai Z."/>
            <person name="Penaflor C."/>
            <person name="Kuehl J.V."/>
            <person name="Boore J.L."/>
            <person name="Jansen R.K."/>
        </authorList>
    </citation>
    <scope>NUCLEOTIDE SEQUENCE [LARGE SCALE GENOMIC DNA]</scope>
</reference>
<accession>A6MMU6</accession>
<protein>
    <recommendedName>
        <fullName evidence="3">Small ribosomal subunit protein uS4c</fullName>
    </recommendedName>
    <alternativeName>
        <fullName>30S ribosomal protein S4, chloroplastic</fullName>
    </alternativeName>
</protein>
<organism>
    <name type="scientific">Illicium oligandrum</name>
    <name type="common">Star anise</name>
    <dbReference type="NCBI Taxonomy" id="145286"/>
    <lineage>
        <taxon>Eukaryota</taxon>
        <taxon>Viridiplantae</taxon>
        <taxon>Streptophyta</taxon>
        <taxon>Embryophyta</taxon>
        <taxon>Tracheophyta</taxon>
        <taxon>Spermatophyta</taxon>
        <taxon>Magnoliopsida</taxon>
        <taxon>Austrobaileyales</taxon>
        <taxon>Schisandraceae</taxon>
        <taxon>Illicium</taxon>
    </lineage>
</organism>
<name>RR4_ILLOL</name>
<dbReference type="EMBL" id="EF380354">
    <property type="protein sequence ID" value="ABQ52521.1"/>
    <property type="molecule type" value="Genomic_DNA"/>
</dbReference>
<dbReference type="RefSeq" id="YP_001294272.1">
    <property type="nucleotide sequence ID" value="NC_009600.1"/>
</dbReference>
<dbReference type="SMR" id="A6MMU6"/>
<dbReference type="GeneID" id="5236815"/>
<dbReference type="GO" id="GO:0009507">
    <property type="term" value="C:chloroplast"/>
    <property type="evidence" value="ECO:0007669"/>
    <property type="project" value="UniProtKB-SubCell"/>
</dbReference>
<dbReference type="GO" id="GO:0015935">
    <property type="term" value="C:small ribosomal subunit"/>
    <property type="evidence" value="ECO:0007669"/>
    <property type="project" value="InterPro"/>
</dbReference>
<dbReference type="GO" id="GO:0019843">
    <property type="term" value="F:rRNA binding"/>
    <property type="evidence" value="ECO:0007669"/>
    <property type="project" value="UniProtKB-UniRule"/>
</dbReference>
<dbReference type="GO" id="GO:0003735">
    <property type="term" value="F:structural constituent of ribosome"/>
    <property type="evidence" value="ECO:0007669"/>
    <property type="project" value="InterPro"/>
</dbReference>
<dbReference type="GO" id="GO:0042274">
    <property type="term" value="P:ribosomal small subunit biogenesis"/>
    <property type="evidence" value="ECO:0007669"/>
    <property type="project" value="TreeGrafter"/>
</dbReference>
<dbReference type="GO" id="GO:0006412">
    <property type="term" value="P:translation"/>
    <property type="evidence" value="ECO:0007669"/>
    <property type="project" value="UniProtKB-UniRule"/>
</dbReference>
<dbReference type="CDD" id="cd00165">
    <property type="entry name" value="S4"/>
    <property type="match status" value="1"/>
</dbReference>
<dbReference type="FunFam" id="1.10.1050.10:FF:000002">
    <property type="entry name" value="30S ribosomal protein S4, chloroplastic"/>
    <property type="match status" value="1"/>
</dbReference>
<dbReference type="FunFam" id="3.10.290.10:FF:000081">
    <property type="entry name" value="30S ribosomal protein S4, chloroplastic"/>
    <property type="match status" value="1"/>
</dbReference>
<dbReference type="Gene3D" id="1.10.1050.10">
    <property type="entry name" value="Ribosomal Protein S4 Delta 41, Chain A, domain 1"/>
    <property type="match status" value="1"/>
</dbReference>
<dbReference type="Gene3D" id="3.10.290.10">
    <property type="entry name" value="RNA-binding S4 domain"/>
    <property type="match status" value="1"/>
</dbReference>
<dbReference type="HAMAP" id="MF_01306_B">
    <property type="entry name" value="Ribosomal_uS4_B"/>
    <property type="match status" value="1"/>
</dbReference>
<dbReference type="InterPro" id="IPR022801">
    <property type="entry name" value="Ribosomal_uS4"/>
</dbReference>
<dbReference type="InterPro" id="IPR005709">
    <property type="entry name" value="Ribosomal_uS4_bac-type"/>
</dbReference>
<dbReference type="InterPro" id="IPR018079">
    <property type="entry name" value="Ribosomal_uS4_CS"/>
</dbReference>
<dbReference type="InterPro" id="IPR001912">
    <property type="entry name" value="Ribosomal_uS4_N"/>
</dbReference>
<dbReference type="InterPro" id="IPR002942">
    <property type="entry name" value="S4_RNA-bd"/>
</dbReference>
<dbReference type="InterPro" id="IPR036986">
    <property type="entry name" value="S4_RNA-bd_sf"/>
</dbReference>
<dbReference type="NCBIfam" id="NF003717">
    <property type="entry name" value="PRK05327.1"/>
    <property type="match status" value="1"/>
</dbReference>
<dbReference type="NCBIfam" id="TIGR01017">
    <property type="entry name" value="rpsD_bact"/>
    <property type="match status" value="1"/>
</dbReference>
<dbReference type="PANTHER" id="PTHR11831">
    <property type="entry name" value="30S 40S RIBOSOMAL PROTEIN"/>
    <property type="match status" value="1"/>
</dbReference>
<dbReference type="PANTHER" id="PTHR11831:SF4">
    <property type="entry name" value="SMALL RIBOSOMAL SUBUNIT PROTEIN US4M"/>
    <property type="match status" value="1"/>
</dbReference>
<dbReference type="Pfam" id="PF00163">
    <property type="entry name" value="Ribosomal_S4"/>
    <property type="match status" value="1"/>
</dbReference>
<dbReference type="Pfam" id="PF01479">
    <property type="entry name" value="S4"/>
    <property type="match status" value="1"/>
</dbReference>
<dbReference type="SMART" id="SM01390">
    <property type="entry name" value="Ribosomal_S4"/>
    <property type="match status" value="1"/>
</dbReference>
<dbReference type="SMART" id="SM00363">
    <property type="entry name" value="S4"/>
    <property type="match status" value="1"/>
</dbReference>
<dbReference type="SUPFAM" id="SSF55174">
    <property type="entry name" value="Alpha-L RNA-binding motif"/>
    <property type="match status" value="1"/>
</dbReference>
<dbReference type="PROSITE" id="PS00632">
    <property type="entry name" value="RIBOSOMAL_S4"/>
    <property type="match status" value="1"/>
</dbReference>
<dbReference type="PROSITE" id="PS50889">
    <property type="entry name" value="S4"/>
    <property type="match status" value="1"/>
</dbReference>
<proteinExistence type="inferred from homology"/>
<feature type="chain" id="PRO_0000322372" description="Small ribosomal subunit protein uS4c">
    <location>
        <begin position="1"/>
        <end position="203"/>
    </location>
</feature>
<feature type="domain" description="S4 RNA-binding">
    <location>
        <begin position="89"/>
        <end position="169"/>
    </location>
</feature>
<feature type="region of interest" description="Disordered" evidence="2">
    <location>
        <begin position="15"/>
        <end position="43"/>
    </location>
</feature>
<geneLocation type="chloroplast"/>
<comment type="function">
    <text evidence="1">One of the primary rRNA binding proteins, it binds directly to 16S rRNA where it nucleates assembly of the body of the 30S subunit.</text>
</comment>
<comment type="function">
    <text evidence="1">With S5 and S12 plays an important role in translational accuracy.</text>
</comment>
<comment type="subunit">
    <text evidence="1">Part of the 30S ribosomal subunit. Contacts protein S5. The interaction surface between S4 and S5 is involved in control of translational fidelity (By similarity).</text>
</comment>
<comment type="subcellular location">
    <subcellularLocation>
        <location>Plastid</location>
        <location>Chloroplast</location>
    </subcellularLocation>
</comment>
<comment type="similarity">
    <text evidence="3">Belongs to the universal ribosomal protein uS4 family.</text>
</comment>
<evidence type="ECO:0000250" key="1"/>
<evidence type="ECO:0000256" key="2">
    <source>
        <dbReference type="SAM" id="MobiDB-lite"/>
    </source>
</evidence>
<evidence type="ECO:0000305" key="3"/>
<sequence length="203" mass="23733">MSRYRGPRFKKIRRLGSLPGLTSKRPRSGSDLRNQSRSGKRSQYRIRLEEKQKLRFHYGLTERQLLRYVRIAGKAKGSTGQVLLQLLEMRLDNILFRLGMASTIPGARQLVNHRHILVNGRLVDIPSYRCKPRDIITTRDEHRSRALIQNSIDSSQKEELPKHLTLHSLQYQYKGLVNQIIDSKWVGLKINELLVVEYYSRQT</sequence>